<reference key="1">
    <citation type="journal article" date="2006" name="J. Bacteriol.">
        <title>Comparison of the genome sequence of the poultry pathogen Bordetella avium with those of B. bronchiseptica, B. pertussis, and B. parapertussis reveals extensive diversity in surface structures associated with host interaction.</title>
        <authorList>
            <person name="Sebaihia M."/>
            <person name="Preston A."/>
            <person name="Maskell D.J."/>
            <person name="Kuzmiak H."/>
            <person name="Connell T.D."/>
            <person name="King N.D."/>
            <person name="Orndorff P.E."/>
            <person name="Miyamoto D.M."/>
            <person name="Thomson N.R."/>
            <person name="Harris D."/>
            <person name="Goble A."/>
            <person name="Lord A."/>
            <person name="Murphy L."/>
            <person name="Quail M.A."/>
            <person name="Rutter S."/>
            <person name="Squares R."/>
            <person name="Squares S."/>
            <person name="Woodward J."/>
            <person name="Parkhill J."/>
            <person name="Temple L.M."/>
        </authorList>
    </citation>
    <scope>NUCLEOTIDE SEQUENCE [LARGE SCALE GENOMIC DNA]</scope>
    <source>
        <strain>197N</strain>
    </source>
</reference>
<proteinExistence type="inferred from homology"/>
<gene>
    <name evidence="2" type="primary">infB</name>
    <name type="ordered locus">BAV2394</name>
</gene>
<sequence>MSSNTVAQFATELKMPANVLLEQLRAAGVDLKSVDDSVTDSDKAKLLDSLRRAHGATDGKKITLTRRQTSEIRQADATGRSRTIQVEVRKKRVFVKRDPAELAAEAAAEAKAAAEQAAAEAVDMQPESVEAQAPAPQSVEALAQAPVEAVKPVEAEAPKIETPPVETPAVEAVEAAAPKIEASEAPAEPVQTQTAQAVEETPAPAETPEPVPAVKAEAEPQSAQPAASREQSTAQPVEPEAKKESVAAPKTQEAGPESVVHAQTDLNSKTPAPVAKSETAPSAPKAAQGRPQVAEAARPPVVNDRAREDARRAAEAEAAALREMLNRPRKVLRAPEPEPAGTNNAALSGTLHKPAGKKDAAAAPAAAPKKEGGNKPAAAGAGGKKVIKTAEVSSTWNDDASRKKPADKAAAPGGNSRDGWRSGGKGGGKNSRNGRNQHQDRRNESAAQEFIAREIHVPETISVADLAHKMSVKAAEVIKQLMKLGQMVTINQVLDQETAMIVVEELGHVAIAAKLDDPEAFLDETPGVSEAEALPRAPVVTVMGHVDHGKTSLLDYIRRAKVAAGEAGGITQHIGAYHVETDRGSVTFLDTPGHEAFTAMRARGAKATDIVILVVAADDGVMPQTREAIHHAKAAGVPLVVAVNKIDKPEANPDRVKQELVAEQVVPEEYGGDVPFVPVSAKTGAGIDDLLENVLLQAEILELTAPVEAAAKGIVIEARLDKGRGPVATILVQSGTLKRGDVVLAGASFGRVRAMLDENGKQVQSAGPSIPVEIQGLTEVPAAGDELISLSDERRAREIALFRQGKFRDVKLARQQAAKLESMFDNMGEGTQTLPLIVKTDVQGSQEALVAALTKLSTDEVRVQVVHAAVGGISESDVNLAIASNAVVIGFNVRADQSAKKLADNNGIDLRYYNIIYDAVDEVKAAMSGMLAPEKREEIIGLVEVREVYTISRIGTVAGCMVLDGLVRRDSQVRLLRNNVVTWTGQLDSLRRFKDDVKEVKSGFDCGLTLRGNNDLQMGDQLEVFEIKEIARTL</sequence>
<protein>
    <recommendedName>
        <fullName evidence="2">Translation initiation factor IF-2</fullName>
    </recommendedName>
</protein>
<comment type="function">
    <text evidence="2">One of the essential components for the initiation of protein synthesis. Protects formylmethionyl-tRNA from spontaneous hydrolysis and promotes its binding to the 30S ribosomal subunits. Also involved in the hydrolysis of GTP during the formation of the 70S ribosomal complex.</text>
</comment>
<comment type="subcellular location">
    <subcellularLocation>
        <location evidence="2">Cytoplasm</location>
    </subcellularLocation>
</comment>
<comment type="similarity">
    <text evidence="2">Belongs to the TRAFAC class translation factor GTPase superfamily. Classic translation factor GTPase family. IF-2 subfamily.</text>
</comment>
<accession>Q2KXY7</accession>
<name>IF2_BORA1</name>
<keyword id="KW-0963">Cytoplasm</keyword>
<keyword id="KW-0342">GTP-binding</keyword>
<keyword id="KW-0396">Initiation factor</keyword>
<keyword id="KW-0547">Nucleotide-binding</keyword>
<keyword id="KW-0648">Protein biosynthesis</keyword>
<keyword id="KW-1185">Reference proteome</keyword>
<evidence type="ECO:0000250" key="1"/>
<evidence type="ECO:0000255" key="2">
    <source>
        <dbReference type="HAMAP-Rule" id="MF_00100"/>
    </source>
</evidence>
<evidence type="ECO:0000256" key="3">
    <source>
        <dbReference type="SAM" id="MobiDB-lite"/>
    </source>
</evidence>
<organism>
    <name type="scientific">Bordetella avium (strain 197N)</name>
    <dbReference type="NCBI Taxonomy" id="360910"/>
    <lineage>
        <taxon>Bacteria</taxon>
        <taxon>Pseudomonadati</taxon>
        <taxon>Pseudomonadota</taxon>
        <taxon>Betaproteobacteria</taxon>
        <taxon>Burkholderiales</taxon>
        <taxon>Alcaligenaceae</taxon>
        <taxon>Bordetella</taxon>
    </lineage>
</organism>
<dbReference type="EMBL" id="AM167904">
    <property type="protein sequence ID" value="CAJ50004.1"/>
    <property type="molecule type" value="Genomic_DNA"/>
</dbReference>
<dbReference type="RefSeq" id="WP_012418055.1">
    <property type="nucleotide sequence ID" value="NC_010645.1"/>
</dbReference>
<dbReference type="SMR" id="Q2KXY7"/>
<dbReference type="STRING" id="360910.BAV2394"/>
<dbReference type="KEGG" id="bav:BAV2394"/>
<dbReference type="eggNOG" id="COG0532">
    <property type="taxonomic scope" value="Bacteria"/>
</dbReference>
<dbReference type="HOGENOM" id="CLU_006301_6_0_4"/>
<dbReference type="OrthoDB" id="9811804at2"/>
<dbReference type="Proteomes" id="UP000001977">
    <property type="component" value="Chromosome"/>
</dbReference>
<dbReference type="GO" id="GO:0005829">
    <property type="term" value="C:cytosol"/>
    <property type="evidence" value="ECO:0007669"/>
    <property type="project" value="TreeGrafter"/>
</dbReference>
<dbReference type="GO" id="GO:0005525">
    <property type="term" value="F:GTP binding"/>
    <property type="evidence" value="ECO:0007669"/>
    <property type="project" value="UniProtKB-KW"/>
</dbReference>
<dbReference type="GO" id="GO:0003924">
    <property type="term" value="F:GTPase activity"/>
    <property type="evidence" value="ECO:0007669"/>
    <property type="project" value="UniProtKB-UniRule"/>
</dbReference>
<dbReference type="GO" id="GO:0003743">
    <property type="term" value="F:translation initiation factor activity"/>
    <property type="evidence" value="ECO:0007669"/>
    <property type="project" value="UniProtKB-UniRule"/>
</dbReference>
<dbReference type="CDD" id="cd01887">
    <property type="entry name" value="IF2_eIF5B"/>
    <property type="match status" value="1"/>
</dbReference>
<dbReference type="CDD" id="cd03702">
    <property type="entry name" value="IF2_mtIF2_II"/>
    <property type="match status" value="1"/>
</dbReference>
<dbReference type="CDD" id="cd03692">
    <property type="entry name" value="mtIF2_IVc"/>
    <property type="match status" value="1"/>
</dbReference>
<dbReference type="FunFam" id="2.40.30.10:FF:000007">
    <property type="entry name" value="Translation initiation factor IF-2"/>
    <property type="match status" value="1"/>
</dbReference>
<dbReference type="FunFam" id="2.40.30.10:FF:000008">
    <property type="entry name" value="Translation initiation factor IF-2"/>
    <property type="match status" value="1"/>
</dbReference>
<dbReference type="FunFam" id="3.40.50.10050:FF:000001">
    <property type="entry name" value="Translation initiation factor IF-2"/>
    <property type="match status" value="1"/>
</dbReference>
<dbReference type="FunFam" id="3.40.50.300:FF:000019">
    <property type="entry name" value="Translation initiation factor IF-2"/>
    <property type="match status" value="1"/>
</dbReference>
<dbReference type="Gene3D" id="3.40.50.300">
    <property type="entry name" value="P-loop containing nucleotide triphosphate hydrolases"/>
    <property type="match status" value="1"/>
</dbReference>
<dbReference type="Gene3D" id="3.30.56.50">
    <property type="entry name" value="Putative DNA-binding domain, N-terminal subdomain of bacterial translation initiation factor IF2"/>
    <property type="match status" value="1"/>
</dbReference>
<dbReference type="Gene3D" id="2.40.30.10">
    <property type="entry name" value="Translation factors"/>
    <property type="match status" value="2"/>
</dbReference>
<dbReference type="Gene3D" id="3.40.50.10050">
    <property type="entry name" value="Translation initiation factor IF- 2, domain 3"/>
    <property type="match status" value="1"/>
</dbReference>
<dbReference type="HAMAP" id="MF_00100_B">
    <property type="entry name" value="IF_2_B"/>
    <property type="match status" value="1"/>
</dbReference>
<dbReference type="InterPro" id="IPR009061">
    <property type="entry name" value="DNA-bd_dom_put_sf"/>
</dbReference>
<dbReference type="InterPro" id="IPR053905">
    <property type="entry name" value="EF-G-like_DII"/>
</dbReference>
<dbReference type="InterPro" id="IPR013575">
    <property type="entry name" value="IF2_assoc_dom_bac"/>
</dbReference>
<dbReference type="InterPro" id="IPR044145">
    <property type="entry name" value="IF2_II"/>
</dbReference>
<dbReference type="InterPro" id="IPR006847">
    <property type="entry name" value="IF2_N"/>
</dbReference>
<dbReference type="InterPro" id="IPR027417">
    <property type="entry name" value="P-loop_NTPase"/>
</dbReference>
<dbReference type="InterPro" id="IPR005225">
    <property type="entry name" value="Small_GTP-bd"/>
</dbReference>
<dbReference type="InterPro" id="IPR000795">
    <property type="entry name" value="T_Tr_GTP-bd_dom"/>
</dbReference>
<dbReference type="InterPro" id="IPR000178">
    <property type="entry name" value="TF_IF2_bacterial-like"/>
</dbReference>
<dbReference type="InterPro" id="IPR015760">
    <property type="entry name" value="TIF_IF2"/>
</dbReference>
<dbReference type="InterPro" id="IPR023115">
    <property type="entry name" value="TIF_IF2_dom3"/>
</dbReference>
<dbReference type="InterPro" id="IPR036925">
    <property type="entry name" value="TIF_IF2_dom3_sf"/>
</dbReference>
<dbReference type="InterPro" id="IPR009000">
    <property type="entry name" value="Transl_B-barrel_sf"/>
</dbReference>
<dbReference type="NCBIfam" id="TIGR00487">
    <property type="entry name" value="IF-2"/>
    <property type="match status" value="1"/>
</dbReference>
<dbReference type="NCBIfam" id="TIGR00231">
    <property type="entry name" value="small_GTP"/>
    <property type="match status" value="1"/>
</dbReference>
<dbReference type="PANTHER" id="PTHR43381:SF5">
    <property type="entry name" value="TR-TYPE G DOMAIN-CONTAINING PROTEIN"/>
    <property type="match status" value="1"/>
</dbReference>
<dbReference type="PANTHER" id="PTHR43381">
    <property type="entry name" value="TRANSLATION INITIATION FACTOR IF-2-RELATED"/>
    <property type="match status" value="1"/>
</dbReference>
<dbReference type="Pfam" id="PF22042">
    <property type="entry name" value="EF-G_D2"/>
    <property type="match status" value="1"/>
</dbReference>
<dbReference type="Pfam" id="PF00009">
    <property type="entry name" value="GTP_EFTU"/>
    <property type="match status" value="1"/>
</dbReference>
<dbReference type="Pfam" id="PF11987">
    <property type="entry name" value="IF-2"/>
    <property type="match status" value="1"/>
</dbReference>
<dbReference type="Pfam" id="PF08364">
    <property type="entry name" value="IF2_assoc"/>
    <property type="match status" value="1"/>
</dbReference>
<dbReference type="Pfam" id="PF04760">
    <property type="entry name" value="IF2_N"/>
    <property type="match status" value="2"/>
</dbReference>
<dbReference type="SUPFAM" id="SSF52156">
    <property type="entry name" value="Initiation factor IF2/eIF5b, domain 3"/>
    <property type="match status" value="1"/>
</dbReference>
<dbReference type="SUPFAM" id="SSF52540">
    <property type="entry name" value="P-loop containing nucleoside triphosphate hydrolases"/>
    <property type="match status" value="1"/>
</dbReference>
<dbReference type="SUPFAM" id="SSF46955">
    <property type="entry name" value="Putative DNA-binding domain"/>
    <property type="match status" value="1"/>
</dbReference>
<dbReference type="SUPFAM" id="SSF50447">
    <property type="entry name" value="Translation proteins"/>
    <property type="match status" value="2"/>
</dbReference>
<dbReference type="PROSITE" id="PS51722">
    <property type="entry name" value="G_TR_2"/>
    <property type="match status" value="1"/>
</dbReference>
<dbReference type="PROSITE" id="PS01176">
    <property type="entry name" value="IF2"/>
    <property type="match status" value="1"/>
</dbReference>
<feature type="chain" id="PRO_1000008204" description="Translation initiation factor IF-2">
    <location>
        <begin position="1"/>
        <end position="1034"/>
    </location>
</feature>
<feature type="domain" description="tr-type G">
    <location>
        <begin position="535"/>
        <end position="702"/>
    </location>
</feature>
<feature type="region of interest" description="Disordered" evidence="3">
    <location>
        <begin position="118"/>
        <end position="140"/>
    </location>
</feature>
<feature type="region of interest" description="Disordered" evidence="3">
    <location>
        <begin position="154"/>
        <end position="446"/>
    </location>
</feature>
<feature type="region of interest" description="G1" evidence="1">
    <location>
        <begin position="544"/>
        <end position="551"/>
    </location>
</feature>
<feature type="region of interest" description="G2" evidence="1">
    <location>
        <begin position="569"/>
        <end position="573"/>
    </location>
</feature>
<feature type="region of interest" description="G3" evidence="1">
    <location>
        <begin position="590"/>
        <end position="593"/>
    </location>
</feature>
<feature type="region of interest" description="G4" evidence="1">
    <location>
        <begin position="644"/>
        <end position="647"/>
    </location>
</feature>
<feature type="region of interest" description="G5" evidence="1">
    <location>
        <begin position="680"/>
        <end position="682"/>
    </location>
</feature>
<feature type="compositionally biased region" description="Low complexity" evidence="3">
    <location>
        <begin position="162"/>
        <end position="178"/>
    </location>
</feature>
<feature type="compositionally biased region" description="Low complexity" evidence="3">
    <location>
        <begin position="212"/>
        <end position="228"/>
    </location>
</feature>
<feature type="compositionally biased region" description="Basic and acidic residues" evidence="3">
    <location>
        <begin position="304"/>
        <end position="315"/>
    </location>
</feature>
<feature type="binding site" evidence="2">
    <location>
        <begin position="544"/>
        <end position="551"/>
    </location>
    <ligand>
        <name>GTP</name>
        <dbReference type="ChEBI" id="CHEBI:37565"/>
    </ligand>
</feature>
<feature type="binding site" evidence="2">
    <location>
        <begin position="590"/>
        <end position="594"/>
    </location>
    <ligand>
        <name>GTP</name>
        <dbReference type="ChEBI" id="CHEBI:37565"/>
    </ligand>
</feature>
<feature type="binding site" evidence="2">
    <location>
        <begin position="644"/>
        <end position="647"/>
    </location>
    <ligand>
        <name>GTP</name>
        <dbReference type="ChEBI" id="CHEBI:37565"/>
    </ligand>
</feature>